<keyword id="KW-0489">Methyltransferase</keyword>
<keyword id="KW-0949">S-adenosyl-L-methionine</keyword>
<keyword id="KW-0808">Transferase</keyword>
<protein>
    <recommendedName>
        <fullName evidence="3">O-methyltransferase aunD</fullName>
        <ecNumber evidence="4">2.1.1.-</ecNumber>
    </recommendedName>
    <alternativeName>
        <fullName evidence="3">Aurasperone B biosynthesis cluster protein D</fullName>
    </alternativeName>
</protein>
<comment type="function">
    <text evidence="2 4">O-methyltransferase; part of the gene cluster that mediates the biosynthesis of aurasperone B, a dimeric gamma-naphthopyrone (PubMed:31067027). The first step in the biosynthesis of aurasperone B is the production of gamma-naphthopyrone precursor YWA1 by the non-reducing polyketide synthase albA, via condensation of one acetyl-CoA starter unit with 6 malonyl-CoA units (PubMed:31067027). YWA1 is then methylated by aunE at position C-6 to yield foncesin which is further methylated at position C-8 by aunD to produce fonsecin B (Probable). A key enzyme in the biosynthetic pathway is the cytochrome P450 monooxygenase aunB which catalyzes the oxidative dimerization of fonsecin B to aurasperone B (PubMed:31067027). AunB also catalyzes the oxidative dimerization of rubrofusarin B into aurasperone A (PubMed:31067027).</text>
</comment>
<comment type="pathway">
    <text evidence="4">Secondary metabolite biosynthesis.</text>
</comment>
<comment type="disruption phenotype">
    <text evidence="2">Leads to the accumulatio of aurasperone B and fonsecin B.</text>
</comment>
<comment type="similarity">
    <text evidence="1">Belongs to the class I-like SAM-binding methyltransferase superfamily. Cation-independent O-methyltransferase family.</text>
</comment>
<name>AUND_ASPNA</name>
<reference key="1">
    <citation type="journal article" date="2011" name="Genome Res.">
        <title>Comparative genomics of citric-acid-producing Aspergillus niger ATCC 1015 versus enzyme-producing CBS 513.88.</title>
        <authorList>
            <person name="Andersen M.R."/>
            <person name="Salazar M.P."/>
            <person name="Schaap P.J."/>
            <person name="van de Vondervoort P.J.I."/>
            <person name="Culley D."/>
            <person name="Thykaer J."/>
            <person name="Frisvad J.C."/>
            <person name="Nielsen K.F."/>
            <person name="Albang R."/>
            <person name="Albermann K."/>
            <person name="Berka R.M."/>
            <person name="Braus G.H."/>
            <person name="Braus-Stromeyer S.A."/>
            <person name="Corrochano L.M."/>
            <person name="Dai Z."/>
            <person name="van Dijck P.W.M."/>
            <person name="Hofmann G."/>
            <person name="Lasure L.L."/>
            <person name="Magnuson J.K."/>
            <person name="Menke H."/>
            <person name="Meijer M."/>
            <person name="Meijer S.L."/>
            <person name="Nielsen J.B."/>
            <person name="Nielsen M.L."/>
            <person name="van Ooyen A.J.J."/>
            <person name="Pel H.J."/>
            <person name="Poulsen L."/>
            <person name="Samson R.A."/>
            <person name="Stam H."/>
            <person name="Tsang A."/>
            <person name="van den Brink J.M."/>
            <person name="Atkins A."/>
            <person name="Aerts A."/>
            <person name="Shapiro H."/>
            <person name="Pangilinan J."/>
            <person name="Salamov A."/>
            <person name="Lou Y."/>
            <person name="Lindquist E."/>
            <person name="Lucas S."/>
            <person name="Grimwood J."/>
            <person name="Grigoriev I.V."/>
            <person name="Kubicek C.P."/>
            <person name="Martinez D."/>
            <person name="van Peij N.N.M.E."/>
            <person name="Roubos J.A."/>
            <person name="Nielsen J."/>
            <person name="Baker S.E."/>
        </authorList>
    </citation>
    <scope>NUCLEOTIDE SEQUENCE [LARGE SCALE GENOMIC DNA]</scope>
    <source>
        <strain>ATCC 1015 / CBS 113.46 / FGSC A1144 / LSHB Ac4 / NCTC 3858a / NRRL 328 / USDA 3528.7</strain>
    </source>
</reference>
<reference key="2">
    <citation type="journal article" date="2019" name="Biochemistry">
        <title>Biaryl-forming enzymes from Aspergilli exhibit substrate-dependent stereoselectivity.</title>
        <authorList>
            <person name="Obermaier S."/>
            <person name="Mueller M."/>
        </authorList>
    </citation>
    <scope>FUNCTION</scope>
    <scope>DISRUPTION PHENOTYPE</scope>
    <scope>PATHWAY</scope>
</reference>
<feature type="chain" id="PRO_0000449889" description="O-methyltransferase aunD">
    <location>
        <begin position="1"/>
        <end position="424"/>
    </location>
</feature>
<feature type="active site" description="Proton acceptor" evidence="1">
    <location>
        <position position="326"/>
    </location>
</feature>
<feature type="binding site" evidence="1">
    <location>
        <position position="275"/>
    </location>
    <ligand>
        <name>S-adenosyl-L-methionine</name>
        <dbReference type="ChEBI" id="CHEBI:59789"/>
    </ligand>
</feature>
<dbReference type="EC" id="2.1.1.-" evidence="4"/>
<dbReference type="EMBL" id="ACJE01000004">
    <property type="protein sequence ID" value="EHA27206.1"/>
    <property type="molecule type" value="Genomic_DNA"/>
</dbReference>
<dbReference type="SMR" id="G3XSI5"/>
<dbReference type="STRING" id="380704.G3XSI5"/>
<dbReference type="VEuPathDB" id="FungiDB:ASPNIDRAFT2_1102571"/>
<dbReference type="HOGENOM" id="CLU_005533_1_4_1"/>
<dbReference type="OrthoDB" id="44156at5052"/>
<dbReference type="Proteomes" id="UP000009038">
    <property type="component" value="Unassembled WGS sequence"/>
</dbReference>
<dbReference type="GO" id="GO:0008171">
    <property type="term" value="F:O-methyltransferase activity"/>
    <property type="evidence" value="ECO:0007669"/>
    <property type="project" value="InterPro"/>
</dbReference>
<dbReference type="GO" id="GO:0032259">
    <property type="term" value="P:methylation"/>
    <property type="evidence" value="ECO:0007669"/>
    <property type="project" value="UniProtKB-KW"/>
</dbReference>
<dbReference type="GO" id="GO:0044550">
    <property type="term" value="P:secondary metabolite biosynthetic process"/>
    <property type="evidence" value="ECO:0007669"/>
    <property type="project" value="UniProtKB-ARBA"/>
</dbReference>
<dbReference type="Gene3D" id="3.40.50.150">
    <property type="entry name" value="Vaccinia Virus protein VP39"/>
    <property type="match status" value="1"/>
</dbReference>
<dbReference type="InterPro" id="IPR016461">
    <property type="entry name" value="COMT-like"/>
</dbReference>
<dbReference type="InterPro" id="IPR001077">
    <property type="entry name" value="O_MeTrfase_dom"/>
</dbReference>
<dbReference type="InterPro" id="IPR029063">
    <property type="entry name" value="SAM-dependent_MTases_sf"/>
</dbReference>
<dbReference type="InterPro" id="IPR036390">
    <property type="entry name" value="WH_DNA-bd_sf"/>
</dbReference>
<dbReference type="PANTHER" id="PTHR43712:SF15">
    <property type="entry name" value="MONODICTYPHENONE CLUSTER TRANSCRIPTIONAL COACTIVATOR MDPA"/>
    <property type="match status" value="1"/>
</dbReference>
<dbReference type="PANTHER" id="PTHR43712">
    <property type="entry name" value="PUTATIVE (AFU_ORTHOLOGUE AFUA_4G14580)-RELATED"/>
    <property type="match status" value="1"/>
</dbReference>
<dbReference type="Pfam" id="PF00891">
    <property type="entry name" value="Methyltransf_2"/>
    <property type="match status" value="1"/>
</dbReference>
<dbReference type="SUPFAM" id="SSF53335">
    <property type="entry name" value="S-adenosyl-L-methionine-dependent methyltransferases"/>
    <property type="match status" value="1"/>
</dbReference>
<dbReference type="SUPFAM" id="SSF46785">
    <property type="entry name" value="Winged helix' DNA-binding domain"/>
    <property type="match status" value="1"/>
</dbReference>
<dbReference type="PROSITE" id="PS51683">
    <property type="entry name" value="SAM_OMT_II"/>
    <property type="match status" value="1"/>
</dbReference>
<accession>G3XSI5</accession>
<organism>
    <name type="scientific">Aspergillus niger (strain ATCC 1015 / CBS 113.46 / FGSC A1144 / LSHB Ac4 / NCTC 3858a / NRRL 328 / USDA 3528.7)</name>
    <dbReference type="NCBI Taxonomy" id="380704"/>
    <lineage>
        <taxon>Eukaryota</taxon>
        <taxon>Fungi</taxon>
        <taxon>Dikarya</taxon>
        <taxon>Ascomycota</taxon>
        <taxon>Pezizomycotina</taxon>
        <taxon>Eurotiomycetes</taxon>
        <taxon>Eurotiomycetidae</taxon>
        <taxon>Eurotiales</taxon>
        <taxon>Aspergillaceae</taxon>
        <taxon>Aspergillus</taxon>
        <taxon>Aspergillus subgen. Circumdati</taxon>
    </lineage>
</organism>
<evidence type="ECO:0000255" key="1">
    <source>
        <dbReference type="PROSITE-ProRule" id="PRU01020"/>
    </source>
</evidence>
<evidence type="ECO:0000269" key="2">
    <source>
    </source>
</evidence>
<evidence type="ECO:0000303" key="3">
    <source>
    </source>
</evidence>
<evidence type="ECO:0000305" key="4">
    <source>
    </source>
</evidence>
<gene>
    <name evidence="3" type="primary">aunD</name>
    <name type="ORF">ASPNIDRAFT_205346</name>
</gene>
<sequence>MDDRLSSQLERYASQVTASATLIIRHLKSLKDEPSTLPSQTSVPTAVGTAQLRLAEAAFQLLHFTRDPGNVLTQLTVDLQVISAVRWLLHFEIFSLVPLEGSISYHELSSVANVPENLLRSHIRLAMTCHLFQESGPIGMVAHSPVSCQLASDPSLVSWGQYFANSVFPTATKNVNATAAWPGSKALNETAHNLAFNHHGSFFDYVSQDPARTVEFANSMKAVSTTSLFDTCHLCKSFDWSSLGDGVVVDMGGSTGHVSIALAESFPSLRFVVQDLPDVVSNSIRQLEERQLPLSVTTRIQFQGHSLLHMQPVKGAAVYLLRQILHDWPDREAVQILRSIVPALGPRSKIFIADIVLPEAGSIPATEEQVMRCNDLLLHQFTNTLERTLEDWQAIVSRVSDNLRIQHVYRDPGSILSLLVIETV</sequence>
<proteinExistence type="inferred from homology"/>